<accession>A0A067DE75</accession>
<reference key="1">
    <citation type="journal article" date="2023" name="Science">
        <title>Complex scaffold remodeling in plant triterpene biosynthesis.</title>
        <authorList>
            <person name="De La Pena R."/>
            <person name="Hodgson H."/>
            <person name="Liu J.C."/>
            <person name="Stephenson M.J."/>
            <person name="Martin A.C."/>
            <person name="Owen C."/>
            <person name="Harkess A."/>
            <person name="Leebens-Mack J."/>
            <person name="Jimenez L.E."/>
            <person name="Osbourn A."/>
            <person name="Sattely E.S."/>
        </authorList>
    </citation>
    <scope>NUCLEOTIDE SEQUENCE [MRNA]</scope>
    <scope>FUNCTION</scope>
    <scope>CATALYTIC ACTIVITY</scope>
    <scope>PATHWAY</scope>
    <scope>TISSUE SPECIFICITY</scope>
    <source>
        <strain>cv. Valencia</strain>
    </source>
</reference>
<reference key="2">
    <citation type="submission" date="2014-04" db="EMBL/GenBank/DDBJ databases">
        <authorList>
            <consortium name="International Citrus Genome Consortium"/>
            <person name="Gmitter F."/>
            <person name="Chen C."/>
            <person name="Farmerie W."/>
            <person name="Harkins T."/>
            <person name="Desany B."/>
            <person name="Mohiuddin M."/>
            <person name="Kodira C."/>
            <person name="Borodovsky M."/>
            <person name="Lomsadze A."/>
            <person name="Burns P."/>
            <person name="Jenkins J."/>
            <person name="Prochnik S."/>
            <person name="Shu S."/>
            <person name="Chapman J."/>
            <person name="Pitluck S."/>
            <person name="Schmutz J."/>
            <person name="Rokhsar D."/>
        </authorList>
    </citation>
    <scope>NUCLEOTIDE SEQUENCE [LARGE SCALE GENOMIC DNA]</scope>
    <source>
        <strain>cv. Ridge Pineapple sweet orange</strain>
    </source>
</reference>
<keyword id="KW-0349">Heme</keyword>
<keyword id="KW-0408">Iron</keyword>
<keyword id="KW-0472">Membrane</keyword>
<keyword id="KW-0479">Metal-binding</keyword>
<keyword id="KW-0503">Monooxygenase</keyword>
<keyword id="KW-0560">Oxidoreductase</keyword>
<keyword id="KW-1185">Reference proteome</keyword>
<keyword id="KW-0812">Transmembrane</keyword>
<keyword id="KW-1133">Transmembrane helix</keyword>
<name>C6AD2_CITSI</name>
<dbReference type="EC" id="1.14.14.-" evidence="3"/>
<dbReference type="EMBL" id="OQ091245">
    <property type="protein sequence ID" value="WCJ12490.1"/>
    <property type="molecule type" value="mRNA"/>
</dbReference>
<dbReference type="EMBL" id="KK785668">
    <property type="protein sequence ID" value="KDO41269.1"/>
    <property type="molecule type" value="Genomic_DNA"/>
</dbReference>
<dbReference type="SMR" id="A0A067DE75"/>
<dbReference type="STRING" id="2711.A0A067DE75"/>
<dbReference type="PaxDb" id="2711-XP_006494184-1"/>
<dbReference type="eggNOG" id="KOG0157">
    <property type="taxonomic scope" value="Eukaryota"/>
</dbReference>
<dbReference type="UniPathway" id="UPA00213"/>
<dbReference type="Proteomes" id="UP000027120">
    <property type="component" value="Unassembled WGS sequence"/>
</dbReference>
<dbReference type="GO" id="GO:0016020">
    <property type="term" value="C:membrane"/>
    <property type="evidence" value="ECO:0007669"/>
    <property type="project" value="UniProtKB-SubCell"/>
</dbReference>
<dbReference type="GO" id="GO:0020037">
    <property type="term" value="F:heme binding"/>
    <property type="evidence" value="ECO:0007669"/>
    <property type="project" value="InterPro"/>
</dbReference>
<dbReference type="GO" id="GO:0005506">
    <property type="term" value="F:iron ion binding"/>
    <property type="evidence" value="ECO:0007669"/>
    <property type="project" value="InterPro"/>
</dbReference>
<dbReference type="GO" id="GO:0004497">
    <property type="term" value="F:monooxygenase activity"/>
    <property type="evidence" value="ECO:0000318"/>
    <property type="project" value="GO_Central"/>
</dbReference>
<dbReference type="GO" id="GO:0016705">
    <property type="term" value="F:oxidoreductase activity, acting on paired donors, with incorporation or reduction of molecular oxygen"/>
    <property type="evidence" value="ECO:0007669"/>
    <property type="project" value="InterPro"/>
</dbReference>
<dbReference type="GO" id="GO:0016135">
    <property type="term" value="P:saponin biosynthetic process"/>
    <property type="evidence" value="ECO:0000318"/>
    <property type="project" value="GO_Central"/>
</dbReference>
<dbReference type="CDD" id="cd11043">
    <property type="entry name" value="CYP90-like"/>
    <property type="match status" value="1"/>
</dbReference>
<dbReference type="FunFam" id="1.10.630.10:FF:000022">
    <property type="entry name" value="Taxadiene 5-alpha hydroxylase"/>
    <property type="match status" value="1"/>
</dbReference>
<dbReference type="Gene3D" id="1.10.630.10">
    <property type="entry name" value="Cytochrome P450"/>
    <property type="match status" value="1"/>
</dbReference>
<dbReference type="InterPro" id="IPR001128">
    <property type="entry name" value="Cyt_P450"/>
</dbReference>
<dbReference type="InterPro" id="IPR017972">
    <property type="entry name" value="Cyt_P450_CS"/>
</dbReference>
<dbReference type="InterPro" id="IPR002401">
    <property type="entry name" value="Cyt_P450_E_grp-I"/>
</dbReference>
<dbReference type="InterPro" id="IPR036396">
    <property type="entry name" value="Cyt_P450_sf"/>
</dbReference>
<dbReference type="PANTHER" id="PTHR24286:SF381">
    <property type="entry name" value="BETA-AMYRIN 28-OXIDASE"/>
    <property type="match status" value="1"/>
</dbReference>
<dbReference type="PANTHER" id="PTHR24286">
    <property type="entry name" value="CYTOCHROME P450 26"/>
    <property type="match status" value="1"/>
</dbReference>
<dbReference type="Pfam" id="PF00067">
    <property type="entry name" value="p450"/>
    <property type="match status" value="1"/>
</dbReference>
<dbReference type="PRINTS" id="PR00463">
    <property type="entry name" value="EP450I"/>
</dbReference>
<dbReference type="SUPFAM" id="SSF48264">
    <property type="entry name" value="Cytochrome P450"/>
    <property type="match status" value="1"/>
</dbReference>
<dbReference type="PROSITE" id="PS00086">
    <property type="entry name" value="CYTOCHROME_P450"/>
    <property type="match status" value="1"/>
</dbReference>
<comment type="function">
    <text evidence="3">Monooxygenase involved in the biosynthesis of limonoids triterpene natural products such as limonin, a compound with insecticidal activity responsible for the bitter taste in citrus (PubMed:36701471). Catalyzes the formation of (1R,2R,3S,8R,10R,11R,15S,16S)-3-(acetyloxy)-15-(1-hydroxy-4-oxobutan-2-yl)-2,7,7,11,16-pentamethyl-5-oxo-6-oxatetracyclo[9.7.0.0(2,8).0(12,16)]octadec-12-en-10-yl acetate (PubMed:36701471).</text>
</comment>
<comment type="catalytic activity">
    <reaction evidence="3">
        <text>(1R,2R,3S,8R,10R,11R,15S,16S)-3-(acetyloxy)-15-[(4R)-4-[(2S)-3,3-dimethyloxiran-2-yl]-1,4-dihydroxybutan-2-yl]-2,7,7,11,16-pentamethyl-5-oxo-6-oxatetracyclo[9.7.0.0(2,8).0(12,16)]octadec-12-en-10-yl acetate + reduced [NADPH--hemoprotein reductase] + O2 = (1R,2R,3S,8R,10R,11R,15S,16S)-3-(acetyloxy)-15-(1-hydroxy-4-oxobutan-2-yl)-2,7,7,11,16-pentamethyl-5-oxo-6-oxatetracyclo[9.7.0.0(2,8).0(12,16)]octadec-12-en-10-yl acetate + 2-methylpropanoate + oxidized [NADPH--hemoprotein reductase] + H2O + 2 H(+)</text>
        <dbReference type="Rhea" id="RHEA:80347"/>
        <dbReference type="Rhea" id="RHEA-COMP:11964"/>
        <dbReference type="Rhea" id="RHEA-COMP:11965"/>
        <dbReference type="ChEBI" id="CHEBI:15377"/>
        <dbReference type="ChEBI" id="CHEBI:15378"/>
        <dbReference type="ChEBI" id="CHEBI:15379"/>
        <dbReference type="ChEBI" id="CHEBI:48944"/>
        <dbReference type="ChEBI" id="CHEBI:57618"/>
        <dbReference type="ChEBI" id="CHEBI:58210"/>
        <dbReference type="ChEBI" id="CHEBI:231480"/>
        <dbReference type="ChEBI" id="CHEBI:231481"/>
    </reaction>
    <physiologicalReaction direction="left-to-right" evidence="3">
        <dbReference type="Rhea" id="RHEA:80348"/>
    </physiologicalReaction>
</comment>
<comment type="cofactor">
    <cofactor evidence="1">
        <name>heme</name>
        <dbReference type="ChEBI" id="CHEBI:30413"/>
    </cofactor>
</comment>
<comment type="pathway">
    <text evidence="3">Secondary metabolite biosynthesis; terpenoid biosynthesis.</text>
</comment>
<comment type="subcellular location">
    <subcellularLocation>
        <location evidence="2">Membrane</location>
        <topology evidence="2">Single-pass membrane protein</topology>
    </subcellularLocation>
</comment>
<comment type="tissue specificity">
    <text evidence="3">Expressed in maturing fruits and in juice vesicles.</text>
</comment>
<comment type="similarity">
    <text evidence="5">Belongs to the cytochrome P450 family.</text>
</comment>
<organism>
    <name type="scientific">Citrus sinensis</name>
    <name type="common">Sweet orange</name>
    <name type="synonym">Citrus aurantium var. sinensis</name>
    <dbReference type="NCBI Taxonomy" id="2711"/>
    <lineage>
        <taxon>Eukaryota</taxon>
        <taxon>Viridiplantae</taxon>
        <taxon>Streptophyta</taxon>
        <taxon>Embryophyta</taxon>
        <taxon>Tracheophyta</taxon>
        <taxon>Spermatophyta</taxon>
        <taxon>Magnoliopsida</taxon>
        <taxon>eudicotyledons</taxon>
        <taxon>Gunneridae</taxon>
        <taxon>Pentapetalae</taxon>
        <taxon>rosids</taxon>
        <taxon>malvids</taxon>
        <taxon>Sapindales</taxon>
        <taxon>Rutaceae</taxon>
        <taxon>Aurantioideae</taxon>
        <taxon>Citrus</taxon>
    </lineage>
</organism>
<protein>
    <recommendedName>
        <fullName evidence="4">Cytochrome P450 family 716 subfamily AD polypeptide 2</fullName>
        <shortName evidence="4">CsCYP716AD2</shortName>
        <ecNumber evidence="3">1.14.14.-</ecNumber>
    </recommendedName>
</protein>
<proteinExistence type="evidence at protein level"/>
<feature type="chain" id="PRO_0000461373" description="Cytochrome P450 family 716 subfamily AD polypeptide 2">
    <location>
        <begin position="1"/>
        <end position="488"/>
    </location>
</feature>
<feature type="transmembrane region" description="Helical" evidence="2">
    <location>
        <begin position="5"/>
        <end position="25"/>
    </location>
</feature>
<feature type="binding site" description="axial binding residue" evidence="1">
    <location>
        <position position="433"/>
    </location>
    <ligand>
        <name>heme</name>
        <dbReference type="ChEBI" id="CHEBI:30413"/>
    </ligand>
    <ligandPart>
        <name>Fe</name>
        <dbReference type="ChEBI" id="CHEBI:18248"/>
    </ligandPart>
</feature>
<feature type="sequence conflict" description="In Ref. 1; WCJ12490." evidence="5" ref="1">
    <original>GD</original>
    <variation>RE</variation>
    <location>
        <begin position="251"/>
        <end position="252"/>
    </location>
</feature>
<feature type="sequence conflict" description="In Ref. 1; WCJ12490." evidence="5" ref="1">
    <original>I</original>
    <variation>T</variation>
    <location>
        <position position="280"/>
    </location>
</feature>
<feature type="sequence conflict" description="In Ref. 1; WCJ12490." evidence="5" ref="1">
    <original>N</original>
    <variation>I</variation>
    <location>
        <position position="460"/>
    </location>
</feature>
<evidence type="ECO:0000250" key="1">
    <source>
        <dbReference type="UniProtKB" id="Q96242"/>
    </source>
</evidence>
<evidence type="ECO:0000255" key="2"/>
<evidence type="ECO:0000269" key="3">
    <source>
    </source>
</evidence>
<evidence type="ECO:0000303" key="4">
    <source>
    </source>
</evidence>
<evidence type="ECO:0000305" key="5"/>
<evidence type="ECO:0000312" key="6">
    <source>
        <dbReference type="EMBL" id="KDO41269.1"/>
    </source>
</evidence>
<sequence>MELLLLLLSTLLILTLCCHFFYLFIRTNKQNGSEKLPLPPGHVSWPFKYFETLDYLKKARTNTIHKFIAERVQKYKTKCFKTCHIGQNMVFLTSAEGNKFLFSNDYKLVRSWWPVTFLKVFENAGEEITVEEVIRARKQFLSFFNEPDALARHVAITDQVVQDHFKCYWDGSKQVGVYPLARKLTFDVSCRLLADIQDREILDESLPLMGNVVRAFFAFPINFPGTILNRAIKSSRRLRKIFVDIIKERRGDLLEKKNLDQRNDVLSRLLVENYKEGRDIDDVFLAKNLVSLLSAAYDNPSVTITSIVKNLAERPEIYEKVRKEQIEIAKSKAPGEHMSMEDVKKMKFSMNVLSESLRLEAPASGTFREALDDFNYEGFLIPKGWKVHWSVHATHRNPEYFSNPETFDPSRFERNDPIVPYSYVPFGGGHHICPGKDYAKLQILLFMHHVVRKFKWEKVNPDEQLIRAPNLFAPKGLPVRLYPYAYEN</sequence>
<gene>
    <name evidence="4" type="primary">CYP716AD2</name>
    <name evidence="6" type="ORF">CISIN_1g011325mg</name>
</gene>